<accession>A6LC86</accession>
<organism>
    <name type="scientific">Parabacteroides distasonis (strain ATCC 8503 / DSM 20701 / CIP 104284 / JCM 5825 / NCTC 11152)</name>
    <dbReference type="NCBI Taxonomy" id="435591"/>
    <lineage>
        <taxon>Bacteria</taxon>
        <taxon>Pseudomonadati</taxon>
        <taxon>Bacteroidota</taxon>
        <taxon>Bacteroidia</taxon>
        <taxon>Bacteroidales</taxon>
        <taxon>Tannerellaceae</taxon>
        <taxon>Parabacteroides</taxon>
    </lineage>
</organism>
<reference key="1">
    <citation type="journal article" date="2007" name="PLoS Biol.">
        <title>Evolution of symbiotic bacteria in the distal human intestine.</title>
        <authorList>
            <person name="Xu J."/>
            <person name="Mahowald M.A."/>
            <person name="Ley R.E."/>
            <person name="Lozupone C.A."/>
            <person name="Hamady M."/>
            <person name="Martens E.C."/>
            <person name="Henrissat B."/>
            <person name="Coutinho P.M."/>
            <person name="Minx P."/>
            <person name="Latreille P."/>
            <person name="Cordum H."/>
            <person name="Van Brunt A."/>
            <person name="Kim K."/>
            <person name="Fulton R.S."/>
            <person name="Fulton L.A."/>
            <person name="Clifton S.W."/>
            <person name="Wilson R.K."/>
            <person name="Knight R.D."/>
            <person name="Gordon J.I."/>
        </authorList>
    </citation>
    <scope>NUCLEOTIDE SEQUENCE [LARGE SCALE GENOMIC DNA]</scope>
    <source>
        <strain>ATCC 8503 / DSM 20701 / CIP 104284 / JCM 5825 / NCTC 11152</strain>
    </source>
</reference>
<sequence length="238" mass="26377">MTNLSVNINKVATIRNARGGNMPNVLKVAQDCELFGAQGITVHPRPDERHIRYSDVYGLKPLIRTEFNIEGYPCDKFIDLVLKVKPTQVTLVPDAPDAITSNSGWNVKDNFDYLSELVDTFTSQGIRTSIFVGTDLANIELAAKTGTDRIELYTEPYATYYPEDRDKAIAPFVEAAQLAKNLGLGVNAGHDLNLENLAFFNKNIPWLEEVSIGHALICDALYHGLQETIALYKACLNS</sequence>
<protein>
    <recommendedName>
        <fullName evidence="1">Pyridoxine 5'-phosphate synthase</fullName>
        <shortName evidence="1">PNP synthase</shortName>
        <ecNumber evidence="1">2.6.99.2</ecNumber>
    </recommendedName>
</protein>
<dbReference type="EC" id="2.6.99.2" evidence="1"/>
<dbReference type="EMBL" id="CP000140">
    <property type="protein sequence ID" value="ABR43300.1"/>
    <property type="molecule type" value="Genomic_DNA"/>
</dbReference>
<dbReference type="RefSeq" id="WP_005855864.1">
    <property type="nucleotide sequence ID" value="NC_009615.1"/>
</dbReference>
<dbReference type="SMR" id="A6LC86"/>
<dbReference type="STRING" id="435591.BDI_1545"/>
<dbReference type="PaxDb" id="435591-BDI_1545"/>
<dbReference type="KEGG" id="pdi:BDI_1545"/>
<dbReference type="eggNOG" id="COG0854">
    <property type="taxonomic scope" value="Bacteria"/>
</dbReference>
<dbReference type="HOGENOM" id="CLU_074563_1_0_10"/>
<dbReference type="BioCyc" id="PDIS435591:G1G5A-1588-MONOMER"/>
<dbReference type="UniPathway" id="UPA00244">
    <property type="reaction ID" value="UER00313"/>
</dbReference>
<dbReference type="Proteomes" id="UP000000566">
    <property type="component" value="Chromosome"/>
</dbReference>
<dbReference type="GO" id="GO:0005829">
    <property type="term" value="C:cytosol"/>
    <property type="evidence" value="ECO:0007669"/>
    <property type="project" value="TreeGrafter"/>
</dbReference>
<dbReference type="GO" id="GO:0033856">
    <property type="term" value="F:pyridoxine 5'-phosphate synthase activity"/>
    <property type="evidence" value="ECO:0007669"/>
    <property type="project" value="UniProtKB-EC"/>
</dbReference>
<dbReference type="GO" id="GO:0008615">
    <property type="term" value="P:pyridoxine biosynthetic process"/>
    <property type="evidence" value="ECO:0007669"/>
    <property type="project" value="UniProtKB-UniRule"/>
</dbReference>
<dbReference type="CDD" id="cd00003">
    <property type="entry name" value="PNPsynthase"/>
    <property type="match status" value="1"/>
</dbReference>
<dbReference type="FunFam" id="3.20.20.70:FF:000150">
    <property type="entry name" value="Pyridoxine 5'-phosphate synthase"/>
    <property type="match status" value="1"/>
</dbReference>
<dbReference type="Gene3D" id="3.20.20.70">
    <property type="entry name" value="Aldolase class I"/>
    <property type="match status" value="1"/>
</dbReference>
<dbReference type="HAMAP" id="MF_00279">
    <property type="entry name" value="PdxJ"/>
    <property type="match status" value="1"/>
</dbReference>
<dbReference type="InterPro" id="IPR013785">
    <property type="entry name" value="Aldolase_TIM"/>
</dbReference>
<dbReference type="InterPro" id="IPR004569">
    <property type="entry name" value="PyrdxlP_synth_PdxJ"/>
</dbReference>
<dbReference type="InterPro" id="IPR036130">
    <property type="entry name" value="Pyridoxine-5'_phos_synth"/>
</dbReference>
<dbReference type="NCBIfam" id="TIGR00559">
    <property type="entry name" value="pdxJ"/>
    <property type="match status" value="1"/>
</dbReference>
<dbReference type="NCBIfam" id="NF003625">
    <property type="entry name" value="PRK05265.1-3"/>
    <property type="match status" value="1"/>
</dbReference>
<dbReference type="NCBIfam" id="NF003626">
    <property type="entry name" value="PRK05265.1-4"/>
    <property type="match status" value="1"/>
</dbReference>
<dbReference type="PANTHER" id="PTHR30456">
    <property type="entry name" value="PYRIDOXINE 5'-PHOSPHATE SYNTHASE"/>
    <property type="match status" value="1"/>
</dbReference>
<dbReference type="PANTHER" id="PTHR30456:SF0">
    <property type="entry name" value="PYRIDOXINE 5'-PHOSPHATE SYNTHASE"/>
    <property type="match status" value="1"/>
</dbReference>
<dbReference type="Pfam" id="PF03740">
    <property type="entry name" value="PdxJ"/>
    <property type="match status" value="1"/>
</dbReference>
<dbReference type="SUPFAM" id="SSF63892">
    <property type="entry name" value="Pyridoxine 5'-phosphate synthase"/>
    <property type="match status" value="1"/>
</dbReference>
<feature type="chain" id="PRO_1000022384" description="Pyridoxine 5'-phosphate synthase">
    <location>
        <begin position="1"/>
        <end position="238"/>
    </location>
</feature>
<feature type="active site" description="Proton acceptor" evidence="1">
    <location>
        <position position="43"/>
    </location>
</feature>
<feature type="active site" description="Proton acceptor" evidence="1">
    <location>
        <position position="70"/>
    </location>
</feature>
<feature type="active site" description="Proton donor" evidence="1">
    <location>
        <position position="190"/>
    </location>
</feature>
<feature type="binding site" evidence="1">
    <location>
        <position position="7"/>
    </location>
    <ligand>
        <name>3-amino-2-oxopropyl phosphate</name>
        <dbReference type="ChEBI" id="CHEBI:57279"/>
    </ligand>
</feature>
<feature type="binding site" evidence="1">
    <location>
        <position position="18"/>
    </location>
    <ligand>
        <name>3-amino-2-oxopropyl phosphate</name>
        <dbReference type="ChEBI" id="CHEBI:57279"/>
    </ligand>
</feature>
<feature type="binding site" evidence="1">
    <location>
        <position position="45"/>
    </location>
    <ligand>
        <name>1-deoxy-D-xylulose 5-phosphate</name>
        <dbReference type="ChEBI" id="CHEBI:57792"/>
    </ligand>
</feature>
<feature type="binding site" evidence="1">
    <location>
        <position position="50"/>
    </location>
    <ligand>
        <name>1-deoxy-D-xylulose 5-phosphate</name>
        <dbReference type="ChEBI" id="CHEBI:57792"/>
    </ligand>
</feature>
<feature type="binding site" evidence="1">
    <location>
        <position position="100"/>
    </location>
    <ligand>
        <name>1-deoxy-D-xylulose 5-phosphate</name>
        <dbReference type="ChEBI" id="CHEBI:57792"/>
    </ligand>
</feature>
<feature type="binding site" evidence="1">
    <location>
        <position position="191"/>
    </location>
    <ligand>
        <name>3-amino-2-oxopropyl phosphate</name>
        <dbReference type="ChEBI" id="CHEBI:57279"/>
    </ligand>
</feature>
<feature type="binding site" evidence="1">
    <location>
        <begin position="213"/>
        <end position="214"/>
    </location>
    <ligand>
        <name>3-amino-2-oxopropyl phosphate</name>
        <dbReference type="ChEBI" id="CHEBI:57279"/>
    </ligand>
</feature>
<feature type="site" description="Transition state stabilizer" evidence="1">
    <location>
        <position position="151"/>
    </location>
</feature>
<gene>
    <name evidence="1" type="primary">pdxJ</name>
    <name type="ordered locus">BDI_1545</name>
</gene>
<name>PDXJ_PARD8</name>
<keyword id="KW-0963">Cytoplasm</keyword>
<keyword id="KW-0664">Pyridoxine biosynthesis</keyword>
<keyword id="KW-1185">Reference proteome</keyword>
<keyword id="KW-0808">Transferase</keyword>
<comment type="function">
    <text evidence="1">Catalyzes the complicated ring closure reaction between the two acyclic compounds 1-deoxy-D-xylulose-5-phosphate (DXP) and 3-amino-2-oxopropyl phosphate (1-amino-acetone-3-phosphate or AAP) to form pyridoxine 5'-phosphate (PNP) and inorganic phosphate.</text>
</comment>
<comment type="catalytic activity">
    <reaction evidence="1">
        <text>3-amino-2-oxopropyl phosphate + 1-deoxy-D-xylulose 5-phosphate = pyridoxine 5'-phosphate + phosphate + 2 H2O + H(+)</text>
        <dbReference type="Rhea" id="RHEA:15265"/>
        <dbReference type="ChEBI" id="CHEBI:15377"/>
        <dbReference type="ChEBI" id="CHEBI:15378"/>
        <dbReference type="ChEBI" id="CHEBI:43474"/>
        <dbReference type="ChEBI" id="CHEBI:57279"/>
        <dbReference type="ChEBI" id="CHEBI:57792"/>
        <dbReference type="ChEBI" id="CHEBI:58589"/>
        <dbReference type="EC" id="2.6.99.2"/>
    </reaction>
</comment>
<comment type="pathway">
    <text evidence="1">Cofactor biosynthesis; pyridoxine 5'-phosphate biosynthesis; pyridoxine 5'-phosphate from D-erythrose 4-phosphate: step 5/5.</text>
</comment>
<comment type="subunit">
    <text evidence="1">Homooctamer; tetramer of dimers.</text>
</comment>
<comment type="subcellular location">
    <subcellularLocation>
        <location evidence="1">Cytoplasm</location>
    </subcellularLocation>
</comment>
<comment type="similarity">
    <text evidence="1">Belongs to the PNP synthase family.</text>
</comment>
<proteinExistence type="inferred from homology"/>
<evidence type="ECO:0000255" key="1">
    <source>
        <dbReference type="HAMAP-Rule" id="MF_00279"/>
    </source>
</evidence>